<dbReference type="EMBL" id="AB065619">
    <property type="protein sequence ID" value="BAC05846.1"/>
    <property type="molecule type" value="Genomic_DNA"/>
</dbReference>
<dbReference type="EMBL" id="CH471148">
    <property type="protein sequence ID" value="EAW77199.1"/>
    <property type="molecule type" value="Genomic_DNA"/>
</dbReference>
<dbReference type="EMBL" id="BC137142">
    <property type="protein sequence ID" value="AAI37143.1"/>
    <property type="molecule type" value="mRNA"/>
</dbReference>
<dbReference type="EMBL" id="BC137143">
    <property type="protein sequence ID" value="AAI37144.1"/>
    <property type="molecule type" value="mRNA"/>
</dbReference>
<dbReference type="EMBL" id="AF399604">
    <property type="protein sequence ID" value="AAK95089.1"/>
    <property type="molecule type" value="Genomic_DNA"/>
</dbReference>
<dbReference type="EMBL" id="BK004460">
    <property type="protein sequence ID" value="DAA04858.1"/>
    <property type="molecule type" value="Genomic_DNA"/>
</dbReference>
<dbReference type="CCDS" id="CCDS31095.1"/>
<dbReference type="RefSeq" id="NP_001005286.1">
    <property type="nucleotide sequence ID" value="NM_001005286.2"/>
</dbReference>
<dbReference type="SMR" id="Q8NGZ6"/>
<dbReference type="FunCoup" id="Q8NGZ6">
    <property type="interactions" value="464"/>
</dbReference>
<dbReference type="STRING" id="9606.ENSP00000493342"/>
<dbReference type="GlyCosmos" id="Q8NGZ6">
    <property type="glycosylation" value="1 site, No reported glycans"/>
</dbReference>
<dbReference type="GlyGen" id="Q8NGZ6">
    <property type="glycosylation" value="1 site"/>
</dbReference>
<dbReference type="iPTMnet" id="Q8NGZ6"/>
<dbReference type="PhosphoSitePlus" id="Q8NGZ6"/>
<dbReference type="BioMuta" id="OR6F1"/>
<dbReference type="DMDM" id="38372796"/>
<dbReference type="PaxDb" id="9606-ENSP00000305640"/>
<dbReference type="Antibodypedia" id="76510">
    <property type="antibodies" value="6 antibodies from 6 providers"/>
</dbReference>
<dbReference type="DNASU" id="343169"/>
<dbReference type="Ensembl" id="ENST00000641444.1">
    <property type="protein sequence ID" value="ENSP00000493324.1"/>
    <property type="gene ID" value="ENSG00000169214.5"/>
</dbReference>
<dbReference type="Ensembl" id="ENST00000641470.1">
    <property type="protein sequence ID" value="ENSP00000493342.1"/>
    <property type="gene ID" value="ENSG00000169214.5"/>
</dbReference>
<dbReference type="GeneID" id="343169"/>
<dbReference type="KEGG" id="hsa:343169"/>
<dbReference type="MANE-Select" id="ENST00000641470.1">
    <property type="protein sequence ID" value="ENSP00000493342.1"/>
    <property type="RefSeq nucleotide sequence ID" value="NM_001005286.2"/>
    <property type="RefSeq protein sequence ID" value="NP_001005286.1"/>
</dbReference>
<dbReference type="UCSC" id="uc001idj.1">
    <property type="organism name" value="human"/>
</dbReference>
<dbReference type="AGR" id="HGNC:15027"/>
<dbReference type="CTD" id="343169"/>
<dbReference type="GeneCards" id="OR6F1"/>
<dbReference type="HGNC" id="HGNC:15027">
    <property type="gene designation" value="OR6F1"/>
</dbReference>
<dbReference type="HPA" id="ENSG00000169214">
    <property type="expression patterns" value="Tissue enriched (testis)"/>
</dbReference>
<dbReference type="neXtProt" id="NX_Q8NGZ6"/>
<dbReference type="PharmGKB" id="PA32585"/>
<dbReference type="VEuPathDB" id="HostDB:ENSG00000169214"/>
<dbReference type="eggNOG" id="ENOG502SIF0">
    <property type="taxonomic scope" value="Eukaryota"/>
</dbReference>
<dbReference type="GeneTree" id="ENSGT01090000260086"/>
<dbReference type="HOGENOM" id="CLU_012526_8_1_1"/>
<dbReference type="InParanoid" id="Q8NGZ6"/>
<dbReference type="OMA" id="LGSWICG"/>
<dbReference type="OrthoDB" id="9444602at2759"/>
<dbReference type="PAN-GO" id="Q8NGZ6">
    <property type="GO annotations" value="1 GO annotation based on evolutionary models"/>
</dbReference>
<dbReference type="PhylomeDB" id="Q8NGZ6"/>
<dbReference type="TreeFam" id="TF337475"/>
<dbReference type="PathwayCommons" id="Q8NGZ6"/>
<dbReference type="Reactome" id="R-HSA-381753">
    <property type="pathway name" value="Olfactory Signaling Pathway"/>
</dbReference>
<dbReference type="Reactome" id="R-HSA-9752946">
    <property type="pathway name" value="Expression and translocation of olfactory receptors"/>
</dbReference>
<dbReference type="BioGRID-ORCS" id="343169">
    <property type="hits" value="127 hits in 750 CRISPR screens"/>
</dbReference>
<dbReference type="GeneWiki" id="OR6F1"/>
<dbReference type="GenomeRNAi" id="343169"/>
<dbReference type="Pharos" id="Q8NGZ6">
    <property type="development level" value="Tdark"/>
</dbReference>
<dbReference type="PRO" id="PR:Q8NGZ6"/>
<dbReference type="Proteomes" id="UP000005640">
    <property type="component" value="Chromosome 1"/>
</dbReference>
<dbReference type="RNAct" id="Q8NGZ6">
    <property type="molecule type" value="protein"/>
</dbReference>
<dbReference type="Bgee" id="ENSG00000169214">
    <property type="expression patterns" value="Expressed in primordial germ cell in gonad and 2 other cell types or tissues"/>
</dbReference>
<dbReference type="ExpressionAtlas" id="Q8NGZ6">
    <property type="expression patterns" value="baseline and differential"/>
</dbReference>
<dbReference type="GO" id="GO:0005886">
    <property type="term" value="C:plasma membrane"/>
    <property type="evidence" value="ECO:0000304"/>
    <property type="project" value="Reactome"/>
</dbReference>
<dbReference type="GO" id="GO:0004930">
    <property type="term" value="F:G protein-coupled receptor activity"/>
    <property type="evidence" value="ECO:0007669"/>
    <property type="project" value="UniProtKB-KW"/>
</dbReference>
<dbReference type="GO" id="GO:0004984">
    <property type="term" value="F:olfactory receptor activity"/>
    <property type="evidence" value="ECO:0000318"/>
    <property type="project" value="GO_Central"/>
</dbReference>
<dbReference type="CDD" id="cd13954">
    <property type="entry name" value="7tmA_OR"/>
    <property type="match status" value="1"/>
</dbReference>
<dbReference type="FunFam" id="1.10.1220.70:FF:000001">
    <property type="entry name" value="Olfactory receptor"/>
    <property type="match status" value="1"/>
</dbReference>
<dbReference type="FunFam" id="1.20.1070.10:FF:000010">
    <property type="entry name" value="Olfactory receptor"/>
    <property type="match status" value="1"/>
</dbReference>
<dbReference type="Gene3D" id="1.20.1070.10">
    <property type="entry name" value="Rhodopsin 7-helix transmembrane proteins"/>
    <property type="match status" value="1"/>
</dbReference>
<dbReference type="InterPro" id="IPR000276">
    <property type="entry name" value="GPCR_Rhodpsn"/>
</dbReference>
<dbReference type="InterPro" id="IPR017452">
    <property type="entry name" value="GPCR_Rhodpsn_7TM"/>
</dbReference>
<dbReference type="InterPro" id="IPR000725">
    <property type="entry name" value="Olfact_rcpt"/>
</dbReference>
<dbReference type="InterPro" id="IPR047132">
    <property type="entry name" value="Olfact_rcpt_6C-like"/>
</dbReference>
<dbReference type="PANTHER" id="PTHR26454">
    <property type="entry name" value="OLFACTORY RECEPTOR"/>
    <property type="match status" value="1"/>
</dbReference>
<dbReference type="PANTHER" id="PTHR26454:SF12">
    <property type="entry name" value="OLFACTORY RECEPTOR 6F1"/>
    <property type="match status" value="1"/>
</dbReference>
<dbReference type="Pfam" id="PF13853">
    <property type="entry name" value="7tm_4"/>
    <property type="match status" value="1"/>
</dbReference>
<dbReference type="PRINTS" id="PR00237">
    <property type="entry name" value="GPCRRHODOPSN"/>
</dbReference>
<dbReference type="PRINTS" id="PR00245">
    <property type="entry name" value="OLFACTORYR"/>
</dbReference>
<dbReference type="SMART" id="SM01381">
    <property type="entry name" value="7TM_GPCR_Srsx"/>
    <property type="match status" value="1"/>
</dbReference>
<dbReference type="SUPFAM" id="SSF81321">
    <property type="entry name" value="Family A G protein-coupled receptor-like"/>
    <property type="match status" value="1"/>
</dbReference>
<dbReference type="PROSITE" id="PS00237">
    <property type="entry name" value="G_PROTEIN_RECEP_F1_1"/>
    <property type="match status" value="1"/>
</dbReference>
<dbReference type="PROSITE" id="PS50262">
    <property type="entry name" value="G_PROTEIN_RECEP_F1_2"/>
    <property type="match status" value="1"/>
</dbReference>
<keyword id="KW-1003">Cell membrane</keyword>
<keyword id="KW-1015">Disulfide bond</keyword>
<keyword id="KW-0297">G-protein coupled receptor</keyword>
<keyword id="KW-0325">Glycoprotein</keyword>
<keyword id="KW-0472">Membrane</keyword>
<keyword id="KW-0552">Olfaction</keyword>
<keyword id="KW-0675">Receptor</keyword>
<keyword id="KW-1185">Reference proteome</keyword>
<keyword id="KW-0716">Sensory transduction</keyword>
<keyword id="KW-0807">Transducer</keyword>
<keyword id="KW-0812">Transmembrane</keyword>
<keyword id="KW-1133">Transmembrane helix</keyword>
<sequence>MDTGNKTLPQDFLLLGFPGSQTLQLSLFMLFLVMYILTVSGNVAILMLVSTSHQLHTPMYFFLSNLSFLEIWYTTAAVPKALAILLGRSQTISFTSCLLQMYFVFSLGCTEYFLLAAMAYDRCLAICYPLHYGAIMSSLLSAQLALGSWVCGFVAIAVPTALISGLSFCGPRAINHFFCDIAPWIALACTNTQAVELVAFVIAVVVILSSCLITFVSYVYIISTILRIPSASGRSKAFSTCSSHLTVVLIWYGSTVFLHVRTSIKDALDLIKAVHVLNTVVTPVLNPFIYTLRNKEVRETLLKKWKGK</sequence>
<evidence type="ECO:0000255" key="1"/>
<evidence type="ECO:0000255" key="2">
    <source>
        <dbReference type="PROSITE-ProRule" id="PRU00521"/>
    </source>
</evidence>
<evidence type="ECO:0000305" key="3"/>
<feature type="chain" id="PRO_0000150627" description="Olfactory receptor 6F1">
    <location>
        <begin position="1"/>
        <end position="308"/>
    </location>
</feature>
<feature type="topological domain" description="Extracellular" evidence="1">
    <location>
        <begin position="1"/>
        <end position="25"/>
    </location>
</feature>
<feature type="transmembrane region" description="Helical; Name=1" evidence="1">
    <location>
        <begin position="26"/>
        <end position="46"/>
    </location>
</feature>
<feature type="topological domain" description="Cytoplasmic" evidence="1">
    <location>
        <begin position="47"/>
        <end position="54"/>
    </location>
</feature>
<feature type="transmembrane region" description="Helical; Name=2" evidence="1">
    <location>
        <begin position="55"/>
        <end position="75"/>
    </location>
</feature>
<feature type="topological domain" description="Extracellular" evidence="1">
    <location>
        <begin position="76"/>
        <end position="99"/>
    </location>
</feature>
<feature type="transmembrane region" description="Helical; Name=3" evidence="1">
    <location>
        <begin position="100"/>
        <end position="120"/>
    </location>
</feature>
<feature type="topological domain" description="Cytoplasmic" evidence="1">
    <location>
        <begin position="121"/>
        <end position="139"/>
    </location>
</feature>
<feature type="transmembrane region" description="Helical; Name=4" evidence="1">
    <location>
        <begin position="140"/>
        <end position="160"/>
    </location>
</feature>
<feature type="topological domain" description="Extracellular" evidence="1">
    <location>
        <begin position="161"/>
        <end position="197"/>
    </location>
</feature>
<feature type="transmembrane region" description="Helical; Name=5" evidence="1">
    <location>
        <begin position="198"/>
        <end position="217"/>
    </location>
</feature>
<feature type="topological domain" description="Cytoplasmic" evidence="1">
    <location>
        <begin position="218"/>
        <end position="237"/>
    </location>
</feature>
<feature type="transmembrane region" description="Helical; Name=6" evidence="1">
    <location>
        <begin position="238"/>
        <end position="258"/>
    </location>
</feature>
<feature type="topological domain" description="Extracellular" evidence="1">
    <location>
        <begin position="259"/>
        <end position="271"/>
    </location>
</feature>
<feature type="transmembrane region" description="Helical; Name=7" evidence="1">
    <location>
        <begin position="272"/>
        <end position="292"/>
    </location>
</feature>
<feature type="topological domain" description="Cytoplasmic" evidence="1">
    <location>
        <begin position="293"/>
        <end position="308"/>
    </location>
</feature>
<feature type="glycosylation site" description="N-linked (GlcNAc...) asparagine" evidence="1">
    <location>
        <position position="5"/>
    </location>
</feature>
<feature type="disulfide bond" evidence="2">
    <location>
        <begin position="97"/>
        <end position="189"/>
    </location>
</feature>
<feature type="sequence variant" id="VAR_062051" description="In dbSNP:rs60303431.">
    <original>L</original>
    <variation>P</variation>
    <location>
        <position position="13"/>
    </location>
</feature>
<feature type="sequence variant" id="VAR_053221" description="In dbSNP:rs6665599.">
    <original>P</original>
    <variation>A</variation>
    <location>
        <position position="159"/>
    </location>
</feature>
<feature type="sequence variant" id="VAR_034247" description="In dbSNP:rs2282316.">
    <original>F</original>
    <variation>L</variation>
    <location>
        <position position="215"/>
    </location>
</feature>
<gene>
    <name type="primary">OR6F1</name>
</gene>
<comment type="function">
    <text evidence="3">Odorant receptor.</text>
</comment>
<comment type="subcellular location">
    <subcellularLocation>
        <location>Cell membrane</location>
        <topology>Multi-pass membrane protein</topology>
    </subcellularLocation>
</comment>
<comment type="similarity">
    <text evidence="2">Belongs to the G-protein coupled receptor 1 family.</text>
</comment>
<comment type="online information" name="Human Olfactory Receptor Data Exploratorium (HORDE)">
    <link uri="http://genome.weizmann.ac.il/horde/card/index/symbol:OR6F1"/>
</comment>
<reference key="1">
    <citation type="submission" date="2001-07" db="EMBL/GenBank/DDBJ databases">
        <title>Genome-wide discovery and analysis of human seven transmembrane helix receptor genes.</title>
        <authorList>
            <person name="Suwa M."/>
            <person name="Sato T."/>
            <person name="Okouchi I."/>
            <person name="Arita M."/>
            <person name="Futami K."/>
            <person name="Matsumoto S."/>
            <person name="Tsutsumi S."/>
            <person name="Aburatani H."/>
            <person name="Asai K."/>
            <person name="Akiyama Y."/>
        </authorList>
    </citation>
    <scope>NUCLEOTIDE SEQUENCE [GENOMIC DNA]</scope>
</reference>
<reference key="2">
    <citation type="submission" date="2005-07" db="EMBL/GenBank/DDBJ databases">
        <authorList>
            <person name="Mural R.J."/>
            <person name="Istrail S."/>
            <person name="Sutton G.G."/>
            <person name="Florea L."/>
            <person name="Halpern A.L."/>
            <person name="Mobarry C.M."/>
            <person name="Lippert R."/>
            <person name="Walenz B."/>
            <person name="Shatkay H."/>
            <person name="Dew I."/>
            <person name="Miller J.R."/>
            <person name="Flanigan M.J."/>
            <person name="Edwards N.J."/>
            <person name="Bolanos R."/>
            <person name="Fasulo D."/>
            <person name="Halldorsson B.V."/>
            <person name="Hannenhalli S."/>
            <person name="Turner R."/>
            <person name="Yooseph S."/>
            <person name="Lu F."/>
            <person name="Nusskern D.R."/>
            <person name="Shue B.C."/>
            <person name="Zheng X.H."/>
            <person name="Zhong F."/>
            <person name="Delcher A.L."/>
            <person name="Huson D.H."/>
            <person name="Kravitz S.A."/>
            <person name="Mouchard L."/>
            <person name="Reinert K."/>
            <person name="Remington K.A."/>
            <person name="Clark A.G."/>
            <person name="Waterman M.S."/>
            <person name="Eichler E.E."/>
            <person name="Adams M.D."/>
            <person name="Hunkapiller M.W."/>
            <person name="Myers E.W."/>
            <person name="Venter J.C."/>
        </authorList>
    </citation>
    <scope>NUCLEOTIDE SEQUENCE [LARGE SCALE GENOMIC DNA]</scope>
</reference>
<reference key="3">
    <citation type="journal article" date="2004" name="Genome Res.">
        <title>The status, quality, and expansion of the NIH full-length cDNA project: the Mammalian Gene Collection (MGC).</title>
        <authorList>
            <consortium name="The MGC Project Team"/>
        </authorList>
    </citation>
    <scope>NUCLEOTIDE SEQUENCE [LARGE SCALE MRNA]</scope>
    <source>
        <tissue>Testis</tissue>
    </source>
</reference>
<reference key="4">
    <citation type="journal article" date="2002" name="Genomics">
        <title>DEFOG: a practical scheme for deciphering families of genes.</title>
        <authorList>
            <person name="Fuchs T."/>
            <person name="Malecova B."/>
            <person name="Linhart C."/>
            <person name="Sharan R."/>
            <person name="Khen M."/>
            <person name="Herwig R."/>
            <person name="Shmulevich D."/>
            <person name="Elkon R."/>
            <person name="Steinfath M."/>
            <person name="O'Brien J.K."/>
            <person name="Radelof U."/>
            <person name="Lehrach H."/>
            <person name="Lancet D."/>
            <person name="Shamir R."/>
        </authorList>
    </citation>
    <scope>NUCLEOTIDE SEQUENCE [GENOMIC DNA] OF 68-284</scope>
</reference>
<reference key="5">
    <citation type="journal article" date="2004" name="Proc. Natl. Acad. Sci. U.S.A.">
        <title>The human olfactory receptor gene family.</title>
        <authorList>
            <person name="Malnic B."/>
            <person name="Godfrey P.A."/>
            <person name="Buck L.B."/>
        </authorList>
    </citation>
    <scope>IDENTIFICATION</scope>
</reference>
<reference key="6">
    <citation type="journal article" date="2004" name="Proc. Natl. Acad. Sci. U.S.A.">
        <authorList>
            <person name="Malnic B."/>
            <person name="Godfrey P.A."/>
            <person name="Buck L.B."/>
        </authorList>
    </citation>
    <scope>ERRATUM OF PUBMED:14983052</scope>
</reference>
<organism>
    <name type="scientific">Homo sapiens</name>
    <name type="common">Human</name>
    <dbReference type="NCBI Taxonomy" id="9606"/>
    <lineage>
        <taxon>Eukaryota</taxon>
        <taxon>Metazoa</taxon>
        <taxon>Chordata</taxon>
        <taxon>Craniata</taxon>
        <taxon>Vertebrata</taxon>
        <taxon>Euteleostomi</taxon>
        <taxon>Mammalia</taxon>
        <taxon>Eutheria</taxon>
        <taxon>Euarchontoglires</taxon>
        <taxon>Primates</taxon>
        <taxon>Haplorrhini</taxon>
        <taxon>Catarrhini</taxon>
        <taxon>Hominidae</taxon>
        <taxon>Homo</taxon>
    </lineage>
</organism>
<accession>Q8NGZ6</accession>
<accession>B2RNV6</accession>
<accession>Q6IF02</accession>
<accession>Q96R39</accession>
<name>OR6F1_HUMAN</name>
<proteinExistence type="evidence at transcript level"/>
<protein>
    <recommendedName>
        <fullName>Olfactory receptor 6F1</fullName>
    </recommendedName>
    <alternativeName>
        <fullName>Olfactory receptor OR1-38</fullName>
    </alternativeName>
</protein>